<evidence type="ECO:0000250" key="1"/>
<evidence type="ECO:0000256" key="2">
    <source>
        <dbReference type="SAM" id="MobiDB-lite"/>
    </source>
</evidence>
<evidence type="ECO:0000305" key="3"/>
<organism>
    <name type="scientific">Gibberella zeae (strain ATCC MYA-4620 / CBS 123657 / FGSC 9075 / NRRL 31084 / PH-1)</name>
    <name type="common">Wheat head blight fungus</name>
    <name type="synonym">Fusarium graminearum</name>
    <dbReference type="NCBI Taxonomy" id="229533"/>
    <lineage>
        <taxon>Eukaryota</taxon>
        <taxon>Fungi</taxon>
        <taxon>Dikarya</taxon>
        <taxon>Ascomycota</taxon>
        <taxon>Pezizomycotina</taxon>
        <taxon>Sordariomycetes</taxon>
        <taxon>Hypocreomycetidae</taxon>
        <taxon>Hypocreales</taxon>
        <taxon>Nectriaceae</taxon>
        <taxon>Fusarium</taxon>
    </lineage>
</organism>
<keyword id="KW-0507">mRNA processing</keyword>
<keyword id="KW-0539">Nucleus</keyword>
<keyword id="KW-1185">Reference proteome</keyword>
<name>FIP1_GIBZE</name>
<feature type="chain" id="PRO_0000238513" description="Pre-mRNA polyadenylation factor FIP1">
    <location>
        <begin position="1"/>
        <end position="328"/>
    </location>
</feature>
<feature type="region of interest" description="Disordered" evidence="2">
    <location>
        <begin position="1"/>
        <end position="159"/>
    </location>
</feature>
<feature type="region of interest" description="Disordered" evidence="2">
    <location>
        <begin position="301"/>
        <end position="328"/>
    </location>
</feature>
<feature type="compositionally biased region" description="Acidic residues" evidence="2">
    <location>
        <begin position="1"/>
        <end position="11"/>
    </location>
</feature>
<feature type="compositionally biased region" description="Basic and acidic residues" evidence="2">
    <location>
        <begin position="13"/>
        <end position="30"/>
    </location>
</feature>
<feature type="compositionally biased region" description="Acidic residues" evidence="2">
    <location>
        <begin position="31"/>
        <end position="58"/>
    </location>
</feature>
<feature type="compositionally biased region" description="Low complexity" evidence="2">
    <location>
        <begin position="111"/>
        <end position="126"/>
    </location>
</feature>
<feature type="compositionally biased region" description="Gly residues" evidence="2">
    <location>
        <begin position="301"/>
        <end position="321"/>
    </location>
</feature>
<gene>
    <name type="primary">FIP1</name>
    <name type="ORF">FGRAMPH1_01T14641</name>
    <name type="ORF">FGRRES_04164</name>
    <name type="ORF">FGSG_04164</name>
</gene>
<sequence>MDIDEDDDLYQPEEPKLESAPAEDNKPKTDDLEEGEEEDEGAAMDEDDDDDDDSDIDIITERKDGTKPAPPQQSKYSDIRNIPQRTASNDMPAQPAPVKQESESRTSVNVAAPSADKTSAAASKSTIDVNVNPIHPGTGKPITQVNIDEDLPENDKPWRKPGTDISDYFNYGFDEFTWALYASKQETVRGEFGADVFAQNNKKMMEDFNMMMMGGMGMPGGGNSGGQQAGMSGGMDGMPPEMQAMMQQMMASGMDPSQMDPSQMNAMFSGMQNAGGAGAQGAQGGQGGNFGGGFGNNQGGFGYDQNMSGGGGGGGRGGFGGRGRRGRW</sequence>
<protein>
    <recommendedName>
        <fullName>Pre-mRNA polyadenylation factor FIP1</fullName>
    </recommendedName>
</protein>
<accession>Q4IF44</accession>
<accession>A0A0E0S6J8</accession>
<accession>A0A1C3YN90</accession>
<accession>I1RJY0</accession>
<accession>V6R392</accession>
<proteinExistence type="inferred from homology"/>
<dbReference type="EMBL" id="DS231664">
    <property type="protein sequence ID" value="ESU08966.1"/>
    <property type="molecule type" value="Genomic_DNA"/>
</dbReference>
<dbReference type="EMBL" id="HG970333">
    <property type="protein sequence ID" value="SCB65913.1"/>
    <property type="molecule type" value="Genomic_DNA"/>
</dbReference>
<dbReference type="RefSeq" id="XP_011321465.1">
    <property type="nucleotide sequence ID" value="XM_011323163.1"/>
</dbReference>
<dbReference type="SMR" id="Q4IF44"/>
<dbReference type="STRING" id="229533.Q4IF44"/>
<dbReference type="GeneID" id="23551426"/>
<dbReference type="KEGG" id="fgr:FGSG_04164"/>
<dbReference type="VEuPathDB" id="FungiDB:FGRAMPH1_01G14641"/>
<dbReference type="eggNOG" id="KOG1049">
    <property type="taxonomic scope" value="Eukaryota"/>
</dbReference>
<dbReference type="HOGENOM" id="CLU_039307_1_0_1"/>
<dbReference type="InParanoid" id="Q4IF44"/>
<dbReference type="OrthoDB" id="139766at110618"/>
<dbReference type="Proteomes" id="UP000070720">
    <property type="component" value="Chromosome 2"/>
</dbReference>
<dbReference type="GO" id="GO:0005847">
    <property type="term" value="C:mRNA cleavage and polyadenylation specificity factor complex"/>
    <property type="evidence" value="ECO:0007669"/>
    <property type="project" value="TreeGrafter"/>
</dbReference>
<dbReference type="GO" id="GO:0006397">
    <property type="term" value="P:mRNA processing"/>
    <property type="evidence" value="ECO:0007669"/>
    <property type="project" value="UniProtKB-KW"/>
</dbReference>
<dbReference type="InterPro" id="IPR007854">
    <property type="entry name" value="Fip1_dom"/>
</dbReference>
<dbReference type="InterPro" id="IPR051187">
    <property type="entry name" value="Pre-mRNA_3'-end_processing_reg"/>
</dbReference>
<dbReference type="PANTHER" id="PTHR13484">
    <property type="entry name" value="FIP1-LIKE 1 PROTEIN"/>
    <property type="match status" value="1"/>
</dbReference>
<dbReference type="PANTHER" id="PTHR13484:SF0">
    <property type="entry name" value="PRE-MRNA 3'-END-PROCESSING FACTOR FIP1"/>
    <property type="match status" value="1"/>
</dbReference>
<dbReference type="Pfam" id="PF05182">
    <property type="entry name" value="Fip1"/>
    <property type="match status" value="1"/>
</dbReference>
<comment type="function">
    <text evidence="1">Pre-mRNA polyadenylation factor that directly interacts with poly(A) polymerase.</text>
</comment>
<comment type="subcellular location">
    <subcellularLocation>
        <location evidence="1">Nucleus</location>
    </subcellularLocation>
</comment>
<comment type="similarity">
    <text evidence="3">Belongs to the FIP1 family.</text>
</comment>
<reference key="1">
    <citation type="journal article" date="2007" name="Science">
        <title>The Fusarium graminearum genome reveals a link between localized polymorphism and pathogen specialization.</title>
        <authorList>
            <person name="Cuomo C.A."/>
            <person name="Gueldener U."/>
            <person name="Xu J.-R."/>
            <person name="Trail F."/>
            <person name="Turgeon B.G."/>
            <person name="Di Pietro A."/>
            <person name="Walton J.D."/>
            <person name="Ma L.-J."/>
            <person name="Baker S.E."/>
            <person name="Rep M."/>
            <person name="Adam G."/>
            <person name="Antoniw J."/>
            <person name="Baldwin T."/>
            <person name="Calvo S.E."/>
            <person name="Chang Y.-L."/>
            <person name="DeCaprio D."/>
            <person name="Gale L.R."/>
            <person name="Gnerre S."/>
            <person name="Goswami R.S."/>
            <person name="Hammond-Kosack K."/>
            <person name="Harris L.J."/>
            <person name="Hilburn K."/>
            <person name="Kennell J.C."/>
            <person name="Kroken S."/>
            <person name="Magnuson J.K."/>
            <person name="Mannhaupt G."/>
            <person name="Mauceli E.W."/>
            <person name="Mewes H.-W."/>
            <person name="Mitterbauer R."/>
            <person name="Muehlbauer G."/>
            <person name="Muensterkoetter M."/>
            <person name="Nelson D."/>
            <person name="O'Donnell K."/>
            <person name="Ouellet T."/>
            <person name="Qi W."/>
            <person name="Quesneville H."/>
            <person name="Roncero M.I.G."/>
            <person name="Seong K.-Y."/>
            <person name="Tetko I.V."/>
            <person name="Urban M."/>
            <person name="Waalwijk C."/>
            <person name="Ward T.J."/>
            <person name="Yao J."/>
            <person name="Birren B.W."/>
            <person name="Kistler H.C."/>
        </authorList>
    </citation>
    <scope>NUCLEOTIDE SEQUENCE [LARGE SCALE GENOMIC DNA]</scope>
    <source>
        <strain>ATCC MYA-4620 / CBS 123657 / FGSC 9075 / NRRL 31084 / PH-1</strain>
    </source>
</reference>
<reference key="2">
    <citation type="journal article" date="2010" name="Nature">
        <title>Comparative genomics reveals mobile pathogenicity chromosomes in Fusarium.</title>
        <authorList>
            <person name="Ma L.-J."/>
            <person name="van der Does H.C."/>
            <person name="Borkovich K.A."/>
            <person name="Coleman J.J."/>
            <person name="Daboussi M.-J."/>
            <person name="Di Pietro A."/>
            <person name="Dufresne M."/>
            <person name="Freitag M."/>
            <person name="Grabherr M."/>
            <person name="Henrissat B."/>
            <person name="Houterman P.M."/>
            <person name="Kang S."/>
            <person name="Shim W.-B."/>
            <person name="Woloshuk C."/>
            <person name="Xie X."/>
            <person name="Xu J.-R."/>
            <person name="Antoniw J."/>
            <person name="Baker S.E."/>
            <person name="Bluhm B.H."/>
            <person name="Breakspear A."/>
            <person name="Brown D.W."/>
            <person name="Butchko R.A.E."/>
            <person name="Chapman S."/>
            <person name="Coulson R."/>
            <person name="Coutinho P.M."/>
            <person name="Danchin E.G.J."/>
            <person name="Diener A."/>
            <person name="Gale L.R."/>
            <person name="Gardiner D.M."/>
            <person name="Goff S."/>
            <person name="Hammond-Kosack K.E."/>
            <person name="Hilburn K."/>
            <person name="Hua-Van A."/>
            <person name="Jonkers W."/>
            <person name="Kazan K."/>
            <person name="Kodira C.D."/>
            <person name="Koehrsen M."/>
            <person name="Kumar L."/>
            <person name="Lee Y.-H."/>
            <person name="Li L."/>
            <person name="Manners J.M."/>
            <person name="Miranda-Saavedra D."/>
            <person name="Mukherjee M."/>
            <person name="Park G."/>
            <person name="Park J."/>
            <person name="Park S.-Y."/>
            <person name="Proctor R.H."/>
            <person name="Regev A."/>
            <person name="Ruiz-Roldan M.C."/>
            <person name="Sain D."/>
            <person name="Sakthikumar S."/>
            <person name="Sykes S."/>
            <person name="Schwartz D.C."/>
            <person name="Turgeon B.G."/>
            <person name="Wapinski I."/>
            <person name="Yoder O."/>
            <person name="Young S."/>
            <person name="Zeng Q."/>
            <person name="Zhou S."/>
            <person name="Galagan J."/>
            <person name="Cuomo C.A."/>
            <person name="Kistler H.C."/>
            <person name="Rep M."/>
        </authorList>
    </citation>
    <scope>GENOME REANNOTATION</scope>
    <source>
        <strain>ATCC MYA-4620 / CBS 123657 / FGSC 9075 / NRRL 31084 / PH-1</strain>
    </source>
</reference>
<reference key="3">
    <citation type="journal article" date="2015" name="BMC Genomics">
        <title>The completed genome sequence of the pathogenic ascomycete fungus Fusarium graminearum.</title>
        <authorList>
            <person name="King R."/>
            <person name="Urban M."/>
            <person name="Hammond-Kosack M.C.U."/>
            <person name="Hassani-Pak K."/>
            <person name="Hammond-Kosack K.E."/>
        </authorList>
    </citation>
    <scope>NUCLEOTIDE SEQUENCE [LARGE SCALE GENOMIC DNA]</scope>
    <source>
        <strain>ATCC MYA-4620 / CBS 123657 / FGSC 9075 / NRRL 31084 / PH-1</strain>
    </source>
</reference>